<gene>
    <name evidence="7" type="primary">rba-1</name>
    <name evidence="7" type="ORF">K07A1.11</name>
</gene>
<keyword id="KW-0156">Chromatin regulator</keyword>
<keyword id="KW-0217">Developmental protein</keyword>
<keyword id="KW-0539">Nucleus</keyword>
<keyword id="KW-1185">Reference proteome</keyword>
<keyword id="KW-0677">Repeat</keyword>
<keyword id="KW-0678">Repressor</keyword>
<keyword id="KW-0804">Transcription</keyword>
<keyword id="KW-0805">Transcription regulation</keyword>
<keyword id="KW-0853">WD repeat</keyword>
<evidence type="ECO:0000250" key="1"/>
<evidence type="ECO:0000250" key="2">
    <source>
        <dbReference type="UniProtKB" id="Q16576"/>
    </source>
</evidence>
<evidence type="ECO:0000269" key="3">
    <source>
    </source>
</evidence>
<evidence type="ECO:0000269" key="4">
    <source>
    </source>
</evidence>
<evidence type="ECO:0000269" key="5">
    <source>
    </source>
</evidence>
<evidence type="ECO:0000305" key="6"/>
<evidence type="ECO:0000312" key="7">
    <source>
        <dbReference type="WormBase" id="K07A1.11"/>
    </source>
</evidence>
<organism>
    <name type="scientific">Caenorhabditis elegans</name>
    <dbReference type="NCBI Taxonomy" id="6239"/>
    <lineage>
        <taxon>Eukaryota</taxon>
        <taxon>Metazoa</taxon>
        <taxon>Ecdysozoa</taxon>
        <taxon>Nematoda</taxon>
        <taxon>Chromadorea</taxon>
        <taxon>Rhabditida</taxon>
        <taxon>Rhabditina</taxon>
        <taxon>Rhabditomorpha</taxon>
        <taxon>Rhabditoidea</taxon>
        <taxon>Rhabditidae</taxon>
        <taxon>Peloderinae</taxon>
        <taxon>Caenorhabditis</taxon>
    </lineage>
</organism>
<comment type="function">
    <text evidence="1 3 4 5">Core histone-binding subunit that may target chromatin assembly factors, chromatin remodeling factors and histone deacetylases to their histone substrates in a manner that is regulated by nucleosomal DNA (By similarity). Plays a role in regulating cell cycle progression (PubMed:25446273). Required to repress the induction of vulval development by Ras signaling. In association with the zinc finger protein ztf-11, negatively regulates the expression of non-neuronal genes during neurogenesis (PubMed:31386623).</text>
</comment>
<comment type="subunit">
    <text evidence="2 5">Binds directly to helix 1 of the histone fold of histone H4, a region that is not accessible when H4 is in chromatin (By similarity). Interacts with zft-11; the interaction is required to suppress the activation of non-neuronal genes in neurons (PubMed:31386623).</text>
</comment>
<comment type="subcellular location">
    <subcellularLocation>
        <location evidence="1">Nucleus</location>
    </subcellularLocation>
</comment>
<comment type="disruption phenotype">
    <text evidence="4">RNAi-mediated knockdown results in delayed cell cycle progression.</text>
</comment>
<comment type="similarity">
    <text evidence="6">Belongs to the WD repeat RBAP46/RBAP48/MSI1 family.</text>
</comment>
<protein>
    <recommendedName>
        <fullName>Probable histone-binding protein rba-1</fullName>
    </recommendedName>
</protein>
<name>RBA1_CAEEL</name>
<feature type="chain" id="PRO_0000051184" description="Probable histone-binding protein rba-1">
    <location>
        <begin position="1"/>
        <end position="412"/>
    </location>
</feature>
<feature type="repeat" description="WD 1">
    <location>
        <begin position="117"/>
        <end position="157"/>
    </location>
</feature>
<feature type="repeat" description="WD 2">
    <location>
        <begin position="169"/>
        <end position="209"/>
    </location>
</feature>
<feature type="repeat" description="WD 3">
    <location>
        <begin position="219"/>
        <end position="259"/>
    </location>
</feature>
<feature type="repeat" description="WD 4">
    <location>
        <begin position="262"/>
        <end position="302"/>
    </location>
</feature>
<feature type="repeat" description="WD 5">
    <location>
        <begin position="306"/>
        <end position="346"/>
    </location>
</feature>
<feature type="repeat" description="WD 6">
    <location>
        <begin position="365"/>
        <end position="405"/>
    </location>
</feature>
<sequence length="412" mass="46691">MSEAESCEETSKEHRIWKKNVPYLYDTVVTKEVEWPSLSVQWMPDVTKTENSDSSMHRMIHGTHTCGGVQNHLMISKFTITTDTPEFDDAKWDSEREEFGGYGEGSAAKWDTEIKINHPGEVHRARYMPHNPFIIASRGPSDDVYIFDYTKHPSEPKDTKFRPQLRLKGHEGEGYGMSWSNTREGHLLTAGDDGMICHWDINANQTISGQIVPQSKFKGHSSNAEDVSFHALHNFVFGSVGDDRKLNLWDLRQSKPQLTAVGHTAEVNCITFNPFSEYILATGSVDKTVALWDMRNMRKKMYTLKHHNDEIFQVSFSPHYETVLASSGSDDRVIVWDISKIQDPSSSSAASSDSVPPEVIFIHAGHTGKVADFSWNPNRPWTICSSDEFNALQVWEVSNSLVSSEKWETEMI</sequence>
<accession>P90917</accession>
<proteinExistence type="evidence at protein level"/>
<reference key="1">
    <citation type="journal article" date="1998" name="Science">
        <title>Genome sequence of the nematode C. elegans: a platform for investigating biology.</title>
        <authorList>
            <consortium name="The C. elegans sequencing consortium"/>
        </authorList>
    </citation>
    <scope>NUCLEOTIDE SEQUENCE [LARGE SCALE GENOMIC DNA]</scope>
    <source>
        <strain>Bristol N2</strain>
    </source>
</reference>
<reference key="2">
    <citation type="journal article" date="2000" name="Curr. Biol.">
        <title>NURD-complex genes antagonise Ras-induced vulval development in Caenorhabditis elegans.</title>
        <authorList>
            <person name="Solari F."/>
            <person name="Ahringer J."/>
        </authorList>
    </citation>
    <scope>FUNCTION</scope>
</reference>
<reference key="3">
    <citation type="journal article" date="2015" name="Dev. Biol.">
        <title>Comprehensive single cell-resolution analysis of the role of chromatin regulators in early C. elegans embryogenesis.</title>
        <authorList>
            <person name="Krueger A.V."/>
            <person name="Jelier R."/>
            <person name="Dzyubachyk O."/>
            <person name="Zimmerman T."/>
            <person name="Meijering E."/>
            <person name="Lehner B."/>
        </authorList>
    </citation>
    <scope>FUNCTION</scope>
    <scope>DISRUPTION PHENOTYPE</scope>
</reference>
<reference key="4">
    <citation type="journal article" date="2019" name="Elife">
        <title>A Myt1 family transcription factor defines neuronal fate by repressing non-neuronal genes.</title>
        <authorList>
            <person name="Lee J."/>
            <person name="Taylor C.A."/>
            <person name="Barnes K.M."/>
            <person name="Shen A."/>
            <person name="Stewart E.V."/>
            <person name="Chen A."/>
            <person name="Xiang Y.K."/>
            <person name="Bao Z."/>
            <person name="Shen K."/>
        </authorList>
    </citation>
    <scope>FUNCTION</scope>
    <scope>INTERACTION WITH ZTF-11</scope>
</reference>
<dbReference type="EMBL" id="BX284601">
    <property type="protein sequence ID" value="CAB03172.1"/>
    <property type="molecule type" value="Genomic_DNA"/>
</dbReference>
<dbReference type="PIR" id="T23385">
    <property type="entry name" value="T23385"/>
</dbReference>
<dbReference type="RefSeq" id="NP_492551.1">
    <property type="nucleotide sequence ID" value="NM_060150.6"/>
</dbReference>
<dbReference type="SMR" id="P90917"/>
<dbReference type="BioGRID" id="38226">
    <property type="interactions" value="3"/>
</dbReference>
<dbReference type="FunCoup" id="P90917">
    <property type="interactions" value="53"/>
</dbReference>
<dbReference type="IntAct" id="P90917">
    <property type="interactions" value="1"/>
</dbReference>
<dbReference type="STRING" id="6239.K07A1.11.1"/>
<dbReference type="PaxDb" id="6239-K07A1.11"/>
<dbReference type="PeptideAtlas" id="P90917"/>
<dbReference type="EnsemblMetazoa" id="K07A1.11.1">
    <property type="protein sequence ID" value="K07A1.11.1"/>
    <property type="gene ID" value="WBGene00004312"/>
</dbReference>
<dbReference type="GeneID" id="172801"/>
<dbReference type="KEGG" id="cel:CELE_K07A1.11"/>
<dbReference type="UCSC" id="K07A1.11">
    <property type="organism name" value="c. elegans"/>
</dbReference>
<dbReference type="AGR" id="WB:WBGene00004312"/>
<dbReference type="CTD" id="172801"/>
<dbReference type="WormBase" id="K07A1.11">
    <property type="protein sequence ID" value="CE11860"/>
    <property type="gene ID" value="WBGene00004312"/>
    <property type="gene designation" value="rba-1"/>
</dbReference>
<dbReference type="eggNOG" id="KOG0264">
    <property type="taxonomic scope" value="Eukaryota"/>
</dbReference>
<dbReference type="GeneTree" id="ENSGT00940000154748"/>
<dbReference type="HOGENOM" id="CLU_020445_3_1_1"/>
<dbReference type="InParanoid" id="P90917"/>
<dbReference type="OMA" id="MSWSNTR"/>
<dbReference type="OrthoDB" id="427795at2759"/>
<dbReference type="PhylomeDB" id="P90917"/>
<dbReference type="Reactome" id="R-CEL-1538133">
    <property type="pathway name" value="G0 and Early G1"/>
</dbReference>
<dbReference type="Reactome" id="R-CEL-2559580">
    <property type="pathway name" value="Oxidative Stress Induced Senescence"/>
</dbReference>
<dbReference type="Reactome" id="R-CEL-6804758">
    <property type="pathway name" value="Regulation of TP53 Activity through Acetylation"/>
</dbReference>
<dbReference type="Reactome" id="R-CEL-8943724">
    <property type="pathway name" value="Regulation of PTEN gene transcription"/>
</dbReference>
<dbReference type="PRO" id="PR:P90917"/>
<dbReference type="Proteomes" id="UP000001940">
    <property type="component" value="Chromosome I"/>
</dbReference>
<dbReference type="Bgee" id="WBGene00004312">
    <property type="expression patterns" value="Expressed in germ line (C elegans) and 4 other cell types or tissues"/>
</dbReference>
<dbReference type="GO" id="GO:0035098">
    <property type="term" value="C:ESC/E(Z) complex"/>
    <property type="evidence" value="ECO:0000318"/>
    <property type="project" value="GO_Central"/>
</dbReference>
<dbReference type="GO" id="GO:0005634">
    <property type="term" value="C:nucleus"/>
    <property type="evidence" value="ECO:0000318"/>
    <property type="project" value="GO_Central"/>
</dbReference>
<dbReference type="GO" id="GO:0016581">
    <property type="term" value="C:NuRD complex"/>
    <property type="evidence" value="ECO:0000318"/>
    <property type="project" value="GO_Central"/>
</dbReference>
<dbReference type="GO" id="GO:0042393">
    <property type="term" value="F:histone binding"/>
    <property type="evidence" value="ECO:0000318"/>
    <property type="project" value="GO_Central"/>
</dbReference>
<dbReference type="GO" id="GO:0001708">
    <property type="term" value="P:cell fate specification"/>
    <property type="evidence" value="ECO:0000315"/>
    <property type="project" value="WormBase"/>
</dbReference>
<dbReference type="GO" id="GO:0006338">
    <property type="term" value="P:chromatin remodeling"/>
    <property type="evidence" value="ECO:0000318"/>
    <property type="project" value="GO_Central"/>
</dbReference>
<dbReference type="GO" id="GO:0045138">
    <property type="term" value="P:nematode male tail tip morphogenesis"/>
    <property type="evidence" value="ECO:0000315"/>
    <property type="project" value="WormBase"/>
</dbReference>
<dbReference type="GO" id="GO:0006355">
    <property type="term" value="P:regulation of DNA-templated transcription"/>
    <property type="evidence" value="ECO:0000318"/>
    <property type="project" value="GO_Central"/>
</dbReference>
<dbReference type="GO" id="GO:0050767">
    <property type="term" value="P:regulation of neurogenesis"/>
    <property type="evidence" value="ECO:0000315"/>
    <property type="project" value="UniProtKB"/>
</dbReference>
<dbReference type="FunFam" id="2.130.10.10:FF:000512">
    <property type="entry name" value="WD-40 repeat-containing protein MSI1"/>
    <property type="match status" value="1"/>
</dbReference>
<dbReference type="Gene3D" id="2.130.10.10">
    <property type="entry name" value="YVTN repeat-like/Quinoprotein amine dehydrogenase"/>
    <property type="match status" value="1"/>
</dbReference>
<dbReference type="InterPro" id="IPR020472">
    <property type="entry name" value="G-protein_beta_WD-40_rep"/>
</dbReference>
<dbReference type="InterPro" id="IPR022052">
    <property type="entry name" value="Histone-bd_RBBP4-like_N"/>
</dbReference>
<dbReference type="InterPro" id="IPR015943">
    <property type="entry name" value="WD40/YVTN_repeat-like_dom_sf"/>
</dbReference>
<dbReference type="InterPro" id="IPR019775">
    <property type="entry name" value="WD40_repeat_CS"/>
</dbReference>
<dbReference type="InterPro" id="IPR036322">
    <property type="entry name" value="WD40_repeat_dom_sf"/>
</dbReference>
<dbReference type="InterPro" id="IPR001680">
    <property type="entry name" value="WD40_rpt"/>
</dbReference>
<dbReference type="InterPro" id="IPR050459">
    <property type="entry name" value="WD_repeat_RBAP46/RBAP48/MSI1"/>
</dbReference>
<dbReference type="PANTHER" id="PTHR22850">
    <property type="entry name" value="WD40 REPEAT FAMILY"/>
    <property type="match status" value="1"/>
</dbReference>
<dbReference type="Pfam" id="PF12265">
    <property type="entry name" value="CAF1C_H4-bd"/>
    <property type="match status" value="1"/>
</dbReference>
<dbReference type="Pfam" id="PF00400">
    <property type="entry name" value="WD40"/>
    <property type="match status" value="5"/>
</dbReference>
<dbReference type="PRINTS" id="PR00320">
    <property type="entry name" value="GPROTEINBRPT"/>
</dbReference>
<dbReference type="SMART" id="SM00320">
    <property type="entry name" value="WD40"/>
    <property type="match status" value="6"/>
</dbReference>
<dbReference type="SUPFAM" id="SSF50978">
    <property type="entry name" value="WD40 repeat-like"/>
    <property type="match status" value="1"/>
</dbReference>
<dbReference type="PROSITE" id="PS00678">
    <property type="entry name" value="WD_REPEATS_1"/>
    <property type="match status" value="2"/>
</dbReference>
<dbReference type="PROSITE" id="PS50082">
    <property type="entry name" value="WD_REPEATS_2"/>
    <property type="match status" value="4"/>
</dbReference>
<dbReference type="PROSITE" id="PS50294">
    <property type="entry name" value="WD_REPEATS_REGION"/>
    <property type="match status" value="1"/>
</dbReference>